<dbReference type="EMBL" id="CP000910">
    <property type="protein sequence ID" value="ABY23772.1"/>
    <property type="molecule type" value="Genomic_DNA"/>
</dbReference>
<dbReference type="RefSeq" id="WP_012245442.1">
    <property type="nucleotide sequence ID" value="NC_010168.1"/>
</dbReference>
<dbReference type="SMR" id="A9WSI4"/>
<dbReference type="STRING" id="288705.RSal33209_2039"/>
<dbReference type="KEGG" id="rsa:RSal33209_2039"/>
<dbReference type="eggNOG" id="COG1222">
    <property type="taxonomic scope" value="Bacteria"/>
</dbReference>
<dbReference type="HOGENOM" id="CLU_036054_0_0_11"/>
<dbReference type="UniPathway" id="UPA00997"/>
<dbReference type="Proteomes" id="UP000002007">
    <property type="component" value="Chromosome"/>
</dbReference>
<dbReference type="GO" id="GO:0000502">
    <property type="term" value="C:proteasome complex"/>
    <property type="evidence" value="ECO:0007669"/>
    <property type="project" value="UniProtKB-KW"/>
</dbReference>
<dbReference type="GO" id="GO:0005524">
    <property type="term" value="F:ATP binding"/>
    <property type="evidence" value="ECO:0007669"/>
    <property type="project" value="UniProtKB-UniRule"/>
</dbReference>
<dbReference type="GO" id="GO:0016887">
    <property type="term" value="F:ATP hydrolysis activity"/>
    <property type="evidence" value="ECO:0007669"/>
    <property type="project" value="UniProtKB-UniRule"/>
</dbReference>
<dbReference type="GO" id="GO:0019941">
    <property type="term" value="P:modification-dependent protein catabolic process"/>
    <property type="evidence" value="ECO:0007669"/>
    <property type="project" value="InterPro"/>
</dbReference>
<dbReference type="GO" id="GO:0010498">
    <property type="term" value="P:proteasomal protein catabolic process"/>
    <property type="evidence" value="ECO:0007669"/>
    <property type="project" value="InterPro"/>
</dbReference>
<dbReference type="FunFam" id="3.40.50.300:FF:001025">
    <property type="entry name" value="ATPase family, AAA domain-containing 2B"/>
    <property type="match status" value="1"/>
</dbReference>
<dbReference type="Gene3D" id="1.10.8.60">
    <property type="match status" value="1"/>
</dbReference>
<dbReference type="Gene3D" id="2.40.50.140">
    <property type="entry name" value="Nucleic acid-binding proteins"/>
    <property type="match status" value="2"/>
</dbReference>
<dbReference type="Gene3D" id="3.40.50.300">
    <property type="entry name" value="P-loop containing nucleotide triphosphate hydrolases"/>
    <property type="match status" value="1"/>
</dbReference>
<dbReference type="HAMAP" id="MF_02112">
    <property type="entry name" value="ARC_ATPase"/>
    <property type="match status" value="1"/>
</dbReference>
<dbReference type="InterPro" id="IPR003593">
    <property type="entry name" value="AAA+_ATPase"/>
</dbReference>
<dbReference type="InterPro" id="IPR050168">
    <property type="entry name" value="AAA_ATPase_domain"/>
</dbReference>
<dbReference type="InterPro" id="IPR003959">
    <property type="entry name" value="ATPase_AAA_core"/>
</dbReference>
<dbReference type="InterPro" id="IPR003960">
    <property type="entry name" value="ATPase_AAA_CS"/>
</dbReference>
<dbReference type="InterPro" id="IPR012340">
    <property type="entry name" value="NA-bd_OB-fold"/>
</dbReference>
<dbReference type="InterPro" id="IPR027417">
    <property type="entry name" value="P-loop_NTPase"/>
</dbReference>
<dbReference type="InterPro" id="IPR032501">
    <property type="entry name" value="Prot_ATP_ID_OB_2nd"/>
</dbReference>
<dbReference type="InterPro" id="IPR041626">
    <property type="entry name" value="Prot_ATP_ID_OB_N"/>
</dbReference>
<dbReference type="InterPro" id="IPR022482">
    <property type="entry name" value="Proteasome_ATPase"/>
</dbReference>
<dbReference type="NCBIfam" id="TIGR03689">
    <property type="entry name" value="pup_AAA"/>
    <property type="match status" value="1"/>
</dbReference>
<dbReference type="PANTHER" id="PTHR23077">
    <property type="entry name" value="AAA-FAMILY ATPASE"/>
    <property type="match status" value="1"/>
</dbReference>
<dbReference type="PANTHER" id="PTHR23077:SF144">
    <property type="entry name" value="PROTEASOME-ASSOCIATED ATPASE"/>
    <property type="match status" value="1"/>
</dbReference>
<dbReference type="Pfam" id="PF00004">
    <property type="entry name" value="AAA"/>
    <property type="match status" value="1"/>
</dbReference>
<dbReference type="Pfam" id="PF16450">
    <property type="entry name" value="Prot_ATP_ID_OB_C"/>
    <property type="match status" value="1"/>
</dbReference>
<dbReference type="Pfam" id="PF17758">
    <property type="entry name" value="Prot_ATP_ID_OB_N"/>
    <property type="match status" value="1"/>
</dbReference>
<dbReference type="SMART" id="SM00382">
    <property type="entry name" value="AAA"/>
    <property type="match status" value="1"/>
</dbReference>
<dbReference type="SUPFAM" id="SSF52540">
    <property type="entry name" value="P-loop containing nucleoside triphosphate hydrolases"/>
    <property type="match status" value="1"/>
</dbReference>
<dbReference type="PROSITE" id="PS00674">
    <property type="entry name" value="AAA"/>
    <property type="match status" value="1"/>
</dbReference>
<sequence length="594" mass="65129">MTETSANKPENTQAHEGRDYSVLERQFNVLRDKLRNVDRQLAAATQNNTKMTTTLQSAKAEILRLKSALEKDGQAPYSFATLVQINPRRTPGQAVSTLSAADQASSATGLAVTEESVDIAYQGRKMRVGLSPLVNIASLSPGQEVLLNESLTVIAGLGFERTGEIVSVKELIGTDRALVTGRADEERVVKLSGALMSQKIRVGDALSADSRSGYALEKVPRSEVENLILEEVPDISYHDIGGLGPQIEQIRDAVELPFLHPDLYREHGLKAPKGILLYGPPGCGKTLIAKAVANSLAARAAERNGLKETKSFFLNIKGPELLDKYVGETERKIRLIFARAREKASDGSAVVVFFDEMDSLFRTRGTGVSSDVETTIVPQLLSEIDGVERLDNVIVIGASNREDMIDPAILRPGRLDVKVKIQRPDAEAAADIFAKYVTVDLPLHQDDLLAHGNSAQATVDAMIQRTVEAMYSTDKSNEYLEVTYANGDSEMLYFKDFNSGAVIQNVVDRAKKYAIKDLLTTGDKGIRVDHMLRAVADEFREHEDMPNTTNPDDWARISDKKGERITYIRTIIQGKAGQEPGKTLETSLNTGQYL</sequence>
<reference key="1">
    <citation type="journal article" date="2008" name="J. Bacteriol.">
        <title>Genome sequence of the fish pathogen Renibacterium salmoninarum suggests reductive evolution away from an environmental Arthrobacter ancestor.</title>
        <authorList>
            <person name="Wiens G.D."/>
            <person name="Rockey D.D."/>
            <person name="Wu Z."/>
            <person name="Chang J."/>
            <person name="Levy R."/>
            <person name="Crane S."/>
            <person name="Chen D.S."/>
            <person name="Capri G.R."/>
            <person name="Burnett J.R."/>
            <person name="Sudheesh P.S."/>
            <person name="Schipma M.J."/>
            <person name="Burd H."/>
            <person name="Bhattacharyya A."/>
            <person name="Rhodes L.D."/>
            <person name="Kaul R."/>
            <person name="Strom M.S."/>
        </authorList>
    </citation>
    <scope>NUCLEOTIDE SEQUENCE [LARGE SCALE GENOMIC DNA]</scope>
    <source>
        <strain>ATCC 33209 / DSM 20767 / JCM 11484 / NBRC 15589 / NCIMB 2235</strain>
    </source>
</reference>
<comment type="function">
    <text evidence="1">ATPase which is responsible for recognizing, binding, unfolding and translocation of pupylated proteins into the bacterial 20S proteasome core particle. May be essential for opening the gate of the 20S proteasome via an interaction with its C-terminus, thereby allowing substrate entry and access to the site of proteolysis. Thus, the C-termini of the proteasomal ATPase may function like a 'key in a lock' to induce gate opening and therefore regulate proteolysis.</text>
</comment>
<comment type="pathway">
    <text evidence="1">Protein degradation; proteasomal Pup-dependent pathway.</text>
</comment>
<comment type="subunit">
    <text evidence="1">Homohexamer. Assembles into a hexameric ring structure that caps the 20S proteasome core. Strongly interacts with the prokaryotic ubiquitin-like protein Pup through a hydrophobic interface; the interacting region of ARC lies in its N-terminal coiled-coil domain. There is one Pup binding site per ARC hexamer ring. Upon ATP-binding, the C-terminus of ARC interacts with the alpha-rings of the proteasome core, possibly by binding to the intersubunit pockets.</text>
</comment>
<comment type="domain">
    <text evidence="1">Consists of three main regions, an N-terminal coiled-coil domain that binds to protein Pup and functions as a docking station, an interdomain involved in ARC hexamerization, and a C-terminal ATPase domain of the AAA type.</text>
</comment>
<comment type="similarity">
    <text evidence="1">Belongs to the AAA ATPase family.</text>
</comment>
<proteinExistence type="inferred from homology"/>
<gene>
    <name evidence="1" type="primary">arc</name>
    <name type="ordered locus">RSal33209_2039</name>
</gene>
<evidence type="ECO:0000255" key="1">
    <source>
        <dbReference type="HAMAP-Rule" id="MF_02112"/>
    </source>
</evidence>
<evidence type="ECO:0000256" key="2">
    <source>
        <dbReference type="SAM" id="MobiDB-lite"/>
    </source>
</evidence>
<name>ARC_RENSM</name>
<keyword id="KW-0067">ATP-binding</keyword>
<keyword id="KW-0143">Chaperone</keyword>
<keyword id="KW-0175">Coiled coil</keyword>
<keyword id="KW-0547">Nucleotide-binding</keyword>
<keyword id="KW-0647">Proteasome</keyword>
<keyword id="KW-1185">Reference proteome</keyword>
<organism>
    <name type="scientific">Renibacterium salmoninarum (strain ATCC 33209 / DSM 20767 / JCM 11484 / NBRC 15589 / NCIMB 2235)</name>
    <dbReference type="NCBI Taxonomy" id="288705"/>
    <lineage>
        <taxon>Bacteria</taxon>
        <taxon>Bacillati</taxon>
        <taxon>Actinomycetota</taxon>
        <taxon>Actinomycetes</taxon>
        <taxon>Micrococcales</taxon>
        <taxon>Micrococcaceae</taxon>
        <taxon>Renibacterium</taxon>
    </lineage>
</organism>
<accession>A9WSI4</accession>
<protein>
    <recommendedName>
        <fullName evidence="1">Proteasome-associated ATPase</fullName>
    </recommendedName>
    <alternativeName>
        <fullName evidence="1">AAA ATPase forming ring-shaped complexes</fullName>
        <shortName evidence="1">ARC</shortName>
    </alternativeName>
    <alternativeName>
        <fullName evidence="1">Proteasomal ATPase</fullName>
    </alternativeName>
</protein>
<feature type="chain" id="PRO_0000397011" description="Proteasome-associated ATPase">
    <location>
        <begin position="1"/>
        <end position="594"/>
    </location>
</feature>
<feature type="region of interest" description="Disordered" evidence="2">
    <location>
        <begin position="1"/>
        <end position="20"/>
    </location>
</feature>
<feature type="region of interest" description="Docks into pockets in the proteasome alpha-ring" evidence="1">
    <location>
        <begin position="593"/>
        <end position="594"/>
    </location>
</feature>
<feature type="coiled-coil region" evidence="1">
    <location>
        <begin position="18"/>
        <end position="71"/>
    </location>
</feature>
<feature type="compositionally biased region" description="Polar residues" evidence="2">
    <location>
        <begin position="1"/>
        <end position="12"/>
    </location>
</feature>
<feature type="binding site" evidence="1">
    <location>
        <begin position="282"/>
        <end position="287"/>
    </location>
    <ligand>
        <name>ATP</name>
        <dbReference type="ChEBI" id="CHEBI:30616"/>
    </ligand>
</feature>